<comment type="function">
    <text evidence="1">Mediates the nuclear export of encapsidated genomic RNAs (ribonucleoproteins, RNPs). Acts as an adapter between viral RNPs complexes and the nuclear export machinery of the cell. Possesses no intrinsic RNA-binding activity, but includes a C-terminal M1-binding domain. This domain is believed to allow recognition of RNPs bound to the protein M1. Since protein M1 is not available in large quantities before late stages of infection, such an indirect recognition mechanism probably ensures that genomic RNPs are not exported from the host nucleus until sufficient quantities of viral mRNA and progeny genomic RNA have been synthesized. Furthermore, the RNPs enter the host cytoplasm only when associated with the M1 protein that is necessary to guide them to the plasma membrane. May down-regulate viral RNA synthesis when overproduced.</text>
</comment>
<comment type="subunit">
    <text evidence="1">Interacts with protein M1. May interact with host nucleoporin RAB/HRB and exportin XPO1/CRM1.</text>
</comment>
<comment type="subcellular location">
    <subcellularLocation>
        <location evidence="1">Virion</location>
    </subcellularLocation>
    <subcellularLocation>
        <location evidence="1">Host nucleus</location>
    </subcellularLocation>
</comment>
<comment type="alternative products">
    <event type="alternative splicing"/>
    <isoform>
        <id>P30914-1</id>
        <name>NEP</name>
        <name>NS2</name>
        <sequence type="displayed"/>
    </isoform>
    <isoform>
        <id>P30909-1</id>
        <name>NS1</name>
        <sequence type="external"/>
    </isoform>
</comment>
<comment type="miscellaneous">
    <text>Average number present in a viral particle is estimated to be 130-200 molecules.</text>
</comment>
<comment type="similarity">
    <text evidence="1">Belongs to the influenza viruses NEP family.</text>
</comment>
<name>NEP_I49A0</name>
<gene>
    <name evidence="1" type="primary">NS</name>
</gene>
<evidence type="ECO:0000255" key="1">
    <source>
        <dbReference type="HAMAP-Rule" id="MF_04067"/>
    </source>
</evidence>
<feature type="chain" id="PRO_0000078979" description="Nuclear export protein">
    <location>
        <begin position="1"/>
        <end position="121"/>
    </location>
</feature>
<feature type="short sequence motif" description="Nuclear export signal" evidence="1">
    <location>
        <begin position="12"/>
        <end position="21"/>
    </location>
</feature>
<feature type="short sequence motif" description="Nuclear export signal" evidence="1">
    <location>
        <begin position="85"/>
        <end position="94"/>
    </location>
</feature>
<accession>P30914</accession>
<accession>Q71VQ1</accession>
<organism>
    <name type="scientific">Influenza A virus (strain A/Chicken/Germany/n/1949 H10N7)</name>
    <dbReference type="NCBI Taxonomy" id="11339"/>
    <lineage>
        <taxon>Viruses</taxon>
        <taxon>Riboviria</taxon>
        <taxon>Orthornavirae</taxon>
        <taxon>Negarnaviricota</taxon>
        <taxon>Polyploviricotina</taxon>
        <taxon>Insthoviricetes</taxon>
        <taxon>Articulavirales</taxon>
        <taxon>Orthomyxoviridae</taxon>
        <taxon>Alphainfluenzavirus</taxon>
        <taxon>Alphainfluenzavirus influenzae</taxon>
        <taxon>Influenza A virus</taxon>
    </lineage>
</organism>
<reference key="1">
    <citation type="journal article" date="1991" name="Virology">
        <title>Phylogenetic relationship of the nonstructural (NS) genes of influenza A viruses.</title>
        <authorList>
            <person name="Ludwig S."/>
            <person name="Schultz U."/>
            <person name="Mandler J."/>
            <person name="Fitch W.M."/>
            <person name="Scholtissek C."/>
        </authorList>
    </citation>
    <scope>NUCLEOTIDE SEQUENCE [GENOMIC RNA]</scope>
</reference>
<reference key="2">
    <citation type="journal article" date="1998" name="Virus Res.">
        <title>Multiple alignment comparison of the non-structural genes of influenza A viruses.</title>
        <authorList>
            <person name="Suarez D.L."/>
            <person name="Perdue M.L."/>
        </authorList>
    </citation>
    <scope>NUCLEOTIDE SEQUENCE [GENOMIC RNA]</scope>
</reference>
<organismHost>
    <name type="scientific">Aves</name>
    <dbReference type="NCBI Taxonomy" id="8782"/>
</organismHost>
<keyword id="KW-0025">Alternative splicing</keyword>
<keyword id="KW-1048">Host nucleus</keyword>
<keyword id="KW-0945">Host-virus interaction</keyword>
<keyword id="KW-0813">Transport</keyword>
<keyword id="KW-0946">Virion</keyword>
<dbReference type="EMBL" id="M55464">
    <property type="protein sequence ID" value="ABG72672.1"/>
    <property type="molecule type" value="Genomic_RNA"/>
</dbReference>
<dbReference type="EMBL" id="AF001407">
    <property type="protein sequence ID" value="AAB93959.1"/>
    <property type="molecule type" value="Genomic_RNA"/>
</dbReference>
<dbReference type="SMR" id="P30914"/>
<dbReference type="GO" id="GO:0042025">
    <property type="term" value="C:host cell nucleus"/>
    <property type="evidence" value="ECO:0007669"/>
    <property type="project" value="UniProtKB-SubCell"/>
</dbReference>
<dbReference type="GO" id="GO:0044423">
    <property type="term" value="C:virion component"/>
    <property type="evidence" value="ECO:0007669"/>
    <property type="project" value="UniProtKB-UniRule"/>
</dbReference>
<dbReference type="GO" id="GO:0039675">
    <property type="term" value="P:exit of virus from host cell nucleus through nuclear pore"/>
    <property type="evidence" value="ECO:0007669"/>
    <property type="project" value="UniProtKB-UniRule"/>
</dbReference>
<dbReference type="Gene3D" id="1.10.287.230">
    <property type="match status" value="1"/>
</dbReference>
<dbReference type="HAMAP" id="MF_04067">
    <property type="entry name" value="INFV_NEP"/>
    <property type="match status" value="1"/>
</dbReference>
<dbReference type="InterPro" id="IPR000968">
    <property type="entry name" value="Flu_NS2"/>
</dbReference>
<dbReference type="Pfam" id="PF00601">
    <property type="entry name" value="Flu_NS2"/>
    <property type="match status" value="1"/>
</dbReference>
<dbReference type="SUPFAM" id="SSF101156">
    <property type="entry name" value="Nonstructural protein ns2, Nep, M1-binding domain"/>
    <property type="match status" value="1"/>
</dbReference>
<protein>
    <recommendedName>
        <fullName evidence="1">Nuclear export protein</fullName>
        <shortName evidence="1">NEP</shortName>
    </recommendedName>
    <alternativeName>
        <fullName evidence="1">Non-structural protein 2</fullName>
        <shortName evidence="1">NS2</shortName>
    </alternativeName>
</protein>
<proteinExistence type="inferred from homology"/>
<sequence>MDSNTITSFQDILQRMSKMQLESSSVDLNGMITQFERLKIYRDSLGESVMRMGDLHSLQNRNATWREELSQKFEEIRWLIAECRNILTKTENSFEQITFLQALQLLLEVESEIRTFSFQLI</sequence>